<accession>B6JH82</accession>
<accession>F8BW48</accession>
<protein>
    <recommendedName>
        <fullName evidence="1">Glutamate--tRNA ligase</fullName>
        <ecNumber evidence="1">6.1.1.17</ecNumber>
    </recommendedName>
    <alternativeName>
        <fullName evidence="1">Glutamyl-tRNA synthetase</fullName>
        <shortName evidence="1">GluRS</shortName>
    </alternativeName>
</protein>
<proteinExistence type="inferred from homology"/>
<organism>
    <name type="scientific">Afipia carboxidovorans (strain ATCC 49405 / DSM 1227 / KCTC 32145 / OM5)</name>
    <name type="common">Oligotropha carboxidovorans</name>
    <dbReference type="NCBI Taxonomy" id="504832"/>
    <lineage>
        <taxon>Bacteria</taxon>
        <taxon>Pseudomonadati</taxon>
        <taxon>Pseudomonadota</taxon>
        <taxon>Alphaproteobacteria</taxon>
        <taxon>Hyphomicrobiales</taxon>
        <taxon>Nitrobacteraceae</taxon>
        <taxon>Afipia</taxon>
    </lineage>
</organism>
<dbReference type="EC" id="6.1.1.17" evidence="1"/>
<dbReference type="EMBL" id="CP001196">
    <property type="protein sequence ID" value="ACI93092.1"/>
    <property type="molecule type" value="Genomic_DNA"/>
</dbReference>
<dbReference type="EMBL" id="CP002826">
    <property type="protein sequence ID" value="AEI06759.1"/>
    <property type="molecule type" value="Genomic_DNA"/>
</dbReference>
<dbReference type="RefSeq" id="WP_012563119.1">
    <property type="nucleotide sequence ID" value="NC_015684.1"/>
</dbReference>
<dbReference type="SMR" id="B6JH82"/>
<dbReference type="STRING" id="504832.OCA5_c20520"/>
<dbReference type="KEGG" id="oca:OCAR_5972"/>
<dbReference type="KEGG" id="ocg:OCA5_c20520"/>
<dbReference type="PATRIC" id="fig|504832.7.peg.2172"/>
<dbReference type="eggNOG" id="COG0008">
    <property type="taxonomic scope" value="Bacteria"/>
</dbReference>
<dbReference type="HOGENOM" id="CLU_015768_6_3_5"/>
<dbReference type="OrthoDB" id="9807503at2"/>
<dbReference type="Proteomes" id="UP000007730">
    <property type="component" value="Chromosome"/>
</dbReference>
<dbReference type="GO" id="GO:0005829">
    <property type="term" value="C:cytosol"/>
    <property type="evidence" value="ECO:0007669"/>
    <property type="project" value="TreeGrafter"/>
</dbReference>
<dbReference type="GO" id="GO:0005524">
    <property type="term" value="F:ATP binding"/>
    <property type="evidence" value="ECO:0007669"/>
    <property type="project" value="UniProtKB-UniRule"/>
</dbReference>
<dbReference type="GO" id="GO:0004818">
    <property type="term" value="F:glutamate-tRNA ligase activity"/>
    <property type="evidence" value="ECO:0007669"/>
    <property type="project" value="UniProtKB-UniRule"/>
</dbReference>
<dbReference type="GO" id="GO:0000049">
    <property type="term" value="F:tRNA binding"/>
    <property type="evidence" value="ECO:0007669"/>
    <property type="project" value="InterPro"/>
</dbReference>
<dbReference type="GO" id="GO:0008270">
    <property type="term" value="F:zinc ion binding"/>
    <property type="evidence" value="ECO:0007669"/>
    <property type="project" value="InterPro"/>
</dbReference>
<dbReference type="GO" id="GO:0006424">
    <property type="term" value="P:glutamyl-tRNA aminoacylation"/>
    <property type="evidence" value="ECO:0007669"/>
    <property type="project" value="UniProtKB-UniRule"/>
</dbReference>
<dbReference type="CDD" id="cd00808">
    <property type="entry name" value="GluRS_core"/>
    <property type="match status" value="1"/>
</dbReference>
<dbReference type="FunFam" id="3.40.50.620:FF:000007">
    <property type="entry name" value="Glutamate--tRNA ligase"/>
    <property type="match status" value="1"/>
</dbReference>
<dbReference type="Gene3D" id="1.10.10.350">
    <property type="match status" value="1"/>
</dbReference>
<dbReference type="Gene3D" id="3.40.50.620">
    <property type="entry name" value="HUPs"/>
    <property type="match status" value="1"/>
</dbReference>
<dbReference type="HAMAP" id="MF_00022">
    <property type="entry name" value="Glu_tRNA_synth_type1"/>
    <property type="match status" value="1"/>
</dbReference>
<dbReference type="InterPro" id="IPR045462">
    <property type="entry name" value="aa-tRNA-synth_I_cd-bd"/>
</dbReference>
<dbReference type="InterPro" id="IPR020751">
    <property type="entry name" value="aa-tRNA-synth_I_codon-bd_sub2"/>
</dbReference>
<dbReference type="InterPro" id="IPR001412">
    <property type="entry name" value="aa-tRNA-synth_I_CS"/>
</dbReference>
<dbReference type="InterPro" id="IPR008925">
    <property type="entry name" value="aa_tRNA-synth_I_cd-bd_sf"/>
</dbReference>
<dbReference type="InterPro" id="IPR004527">
    <property type="entry name" value="Glu-tRNA-ligase_bac/mito"/>
</dbReference>
<dbReference type="InterPro" id="IPR000924">
    <property type="entry name" value="Glu/Gln-tRNA-synth"/>
</dbReference>
<dbReference type="InterPro" id="IPR020058">
    <property type="entry name" value="Glu/Gln-tRNA-synth_Ib_cat-dom"/>
</dbReference>
<dbReference type="InterPro" id="IPR049940">
    <property type="entry name" value="GluQ/Sye"/>
</dbReference>
<dbReference type="InterPro" id="IPR033910">
    <property type="entry name" value="GluRS_core"/>
</dbReference>
<dbReference type="InterPro" id="IPR014729">
    <property type="entry name" value="Rossmann-like_a/b/a_fold"/>
</dbReference>
<dbReference type="NCBIfam" id="TIGR00464">
    <property type="entry name" value="gltX_bact"/>
    <property type="match status" value="1"/>
</dbReference>
<dbReference type="PANTHER" id="PTHR43311">
    <property type="entry name" value="GLUTAMATE--TRNA LIGASE"/>
    <property type="match status" value="1"/>
</dbReference>
<dbReference type="PANTHER" id="PTHR43311:SF2">
    <property type="entry name" value="GLUTAMATE--TRNA LIGASE, MITOCHONDRIAL-RELATED"/>
    <property type="match status" value="1"/>
</dbReference>
<dbReference type="Pfam" id="PF19269">
    <property type="entry name" value="Anticodon_2"/>
    <property type="match status" value="1"/>
</dbReference>
<dbReference type="Pfam" id="PF00749">
    <property type="entry name" value="tRNA-synt_1c"/>
    <property type="match status" value="1"/>
</dbReference>
<dbReference type="PRINTS" id="PR00987">
    <property type="entry name" value="TRNASYNTHGLU"/>
</dbReference>
<dbReference type="SUPFAM" id="SSF48163">
    <property type="entry name" value="An anticodon-binding domain of class I aminoacyl-tRNA synthetases"/>
    <property type="match status" value="1"/>
</dbReference>
<dbReference type="SUPFAM" id="SSF52374">
    <property type="entry name" value="Nucleotidylyl transferase"/>
    <property type="match status" value="1"/>
</dbReference>
<dbReference type="PROSITE" id="PS00178">
    <property type="entry name" value="AA_TRNA_LIGASE_I"/>
    <property type="match status" value="1"/>
</dbReference>
<gene>
    <name evidence="1" type="primary">gltX</name>
    <name type="ordered locus">OCAR_5972</name>
    <name type="ordered locus">OCA5_c20520</name>
</gene>
<sequence length="473" mass="52213">MTEPVVTRFAPSPTGFLHIGGARTALFNWLYARKQGGKMLLRIEDTDRERSTDAAIKAILDGLNWLGIEWDGEVIYQFSRAARHREVAEQLLAEGKAYRCYATPEELTKMREAARAEGRAVRYDGRWRDRDPSEAPADVKPVIRLKAPQTGETVIEDQVQGRVVWQNENLDDLVLLRSDGTPTYMLAVVVDDHDMGVTHVIRGDDHLINAARQKHIYDALGWTVPTMAHIPLIHGPDGSKLSKRHGALGVEAYRTMGYLPAALRNYLVRLGWSHGDQEIFSTSEMIEAFELSGIGRSAARFDFAKLENLNGHYMRASGDAELVKAFEDILQFLPQGPALQAKLNDTTRAQLLQAMPGLKERAKTLLELIDSAAYIFADRPLALDAKASAVLTPQVRALLGELRSSLANVTDWNAANTEAAMRAYAEKNNLKLGAVAQPLRAALTGRTTSPGIFDVLAVLGRDDALARLQDQAA</sequence>
<name>SYE_AFIC5</name>
<keyword id="KW-0030">Aminoacyl-tRNA synthetase</keyword>
<keyword id="KW-0067">ATP-binding</keyword>
<keyword id="KW-0963">Cytoplasm</keyword>
<keyword id="KW-0436">Ligase</keyword>
<keyword id="KW-0547">Nucleotide-binding</keyword>
<keyword id="KW-0648">Protein biosynthesis</keyword>
<keyword id="KW-1185">Reference proteome</keyword>
<reference key="1">
    <citation type="journal article" date="2008" name="J. Bacteriol.">
        <title>Genome sequence of the chemolithoautotrophic bacterium Oligotropha carboxidovorans OM5T.</title>
        <authorList>
            <person name="Paul D."/>
            <person name="Bridges S."/>
            <person name="Burgess S.C."/>
            <person name="Dandass Y."/>
            <person name="Lawrence M.L."/>
        </authorList>
    </citation>
    <scope>NUCLEOTIDE SEQUENCE [LARGE SCALE GENOMIC DNA]</scope>
    <source>
        <strain>ATCC 49405 / DSM 1227 / KCTC 32145 / OM5</strain>
    </source>
</reference>
<reference key="2">
    <citation type="journal article" date="2011" name="J. Bacteriol.">
        <title>Complete genome sequences of the chemolithoautotrophic Oligotropha carboxidovorans strains OM4 and OM5.</title>
        <authorList>
            <person name="Volland S."/>
            <person name="Rachinger M."/>
            <person name="Strittmatter A."/>
            <person name="Daniel R."/>
            <person name="Gottschalk G."/>
            <person name="Meyer O."/>
        </authorList>
    </citation>
    <scope>NUCLEOTIDE SEQUENCE [LARGE SCALE GENOMIC DNA]</scope>
    <source>
        <strain>ATCC 49405 / DSM 1227 / KCTC 32145 / OM5</strain>
    </source>
</reference>
<evidence type="ECO:0000255" key="1">
    <source>
        <dbReference type="HAMAP-Rule" id="MF_00022"/>
    </source>
</evidence>
<feature type="chain" id="PRO_1000090094" description="Glutamate--tRNA ligase">
    <location>
        <begin position="1"/>
        <end position="473"/>
    </location>
</feature>
<feature type="short sequence motif" description="'HIGH' region" evidence="1">
    <location>
        <begin position="11"/>
        <end position="21"/>
    </location>
</feature>
<feature type="short sequence motif" description="'KMSKS' region" evidence="1">
    <location>
        <begin position="240"/>
        <end position="244"/>
    </location>
</feature>
<feature type="binding site" evidence="1">
    <location>
        <position position="243"/>
    </location>
    <ligand>
        <name>ATP</name>
        <dbReference type="ChEBI" id="CHEBI:30616"/>
    </ligand>
</feature>
<comment type="function">
    <text evidence="1">Catalyzes the attachment of glutamate to tRNA(Glu) in a two-step reaction: glutamate is first activated by ATP to form Glu-AMP and then transferred to the acceptor end of tRNA(Glu).</text>
</comment>
<comment type="catalytic activity">
    <reaction evidence="1">
        <text>tRNA(Glu) + L-glutamate + ATP = L-glutamyl-tRNA(Glu) + AMP + diphosphate</text>
        <dbReference type="Rhea" id="RHEA:23540"/>
        <dbReference type="Rhea" id="RHEA-COMP:9663"/>
        <dbReference type="Rhea" id="RHEA-COMP:9680"/>
        <dbReference type="ChEBI" id="CHEBI:29985"/>
        <dbReference type="ChEBI" id="CHEBI:30616"/>
        <dbReference type="ChEBI" id="CHEBI:33019"/>
        <dbReference type="ChEBI" id="CHEBI:78442"/>
        <dbReference type="ChEBI" id="CHEBI:78520"/>
        <dbReference type="ChEBI" id="CHEBI:456215"/>
        <dbReference type="EC" id="6.1.1.17"/>
    </reaction>
</comment>
<comment type="subunit">
    <text evidence="1">Monomer.</text>
</comment>
<comment type="subcellular location">
    <subcellularLocation>
        <location evidence="1">Cytoplasm</location>
    </subcellularLocation>
</comment>
<comment type="similarity">
    <text evidence="1">Belongs to the class-I aminoacyl-tRNA synthetase family. Glutamate--tRNA ligase type 1 subfamily.</text>
</comment>